<evidence type="ECO:0000250" key="1"/>
<organism>
    <name type="scientific">Rhizobium meliloti (strain 1021)</name>
    <name type="common">Ensifer meliloti</name>
    <name type="synonym">Sinorhizobium meliloti</name>
    <dbReference type="NCBI Taxonomy" id="266834"/>
    <lineage>
        <taxon>Bacteria</taxon>
        <taxon>Pseudomonadati</taxon>
        <taxon>Pseudomonadota</taxon>
        <taxon>Alphaproteobacteria</taxon>
        <taxon>Hyphomicrobiales</taxon>
        <taxon>Rhizobiaceae</taxon>
        <taxon>Sinorhizobium/Ensifer group</taxon>
        <taxon>Sinorhizobium</taxon>
    </lineage>
</organism>
<protein>
    <recommendedName>
        <fullName>Glutamine--fructose-6-phosphate aminotransferase [isomerizing]</fullName>
        <shortName>GFAT</shortName>
        <ecNumber>2.6.1.16</ecNumber>
    </recommendedName>
    <alternativeName>
        <fullName>Nodulation protein M</fullName>
    </alternativeName>
</protein>
<keyword id="KW-0032">Aminotransferase</keyword>
<keyword id="KW-0963">Cytoplasm</keyword>
<keyword id="KW-0315">Glutamine amidotransferase</keyword>
<keyword id="KW-0536">Nodulation</keyword>
<keyword id="KW-0614">Plasmid</keyword>
<keyword id="KW-1185">Reference proteome</keyword>
<keyword id="KW-0677">Repeat</keyword>
<keyword id="KW-0808">Transferase</keyword>
<name>NODM_RHIME</name>
<gene>
    <name type="primary">nodM</name>
    <name type="ordered locus">RA0482</name>
    <name type="ORF">SMa0878</name>
</gene>
<proteinExistence type="inferred from homology"/>
<geneLocation type="plasmid">
    <name>pSymA</name>
    <name>megaplasmid 1</name>
</geneLocation>
<dbReference type="EC" id="2.6.1.16"/>
<dbReference type="EMBL" id="AE006469">
    <property type="protein sequence ID" value="AAK65140.1"/>
    <property type="molecule type" value="Genomic_DNA"/>
</dbReference>
<dbReference type="PIR" id="B95322">
    <property type="entry name" value="B95322"/>
</dbReference>
<dbReference type="RefSeq" id="NP_435728.1">
    <property type="nucleotide sequence ID" value="NC_003037.1"/>
</dbReference>
<dbReference type="SMR" id="Q92ZK3"/>
<dbReference type="EnsemblBacteria" id="AAK65140">
    <property type="protein sequence ID" value="AAK65140"/>
    <property type="gene ID" value="SMa0878"/>
</dbReference>
<dbReference type="KEGG" id="sme:SMa0878"/>
<dbReference type="PATRIC" id="fig|266834.11.peg.492"/>
<dbReference type="HOGENOM" id="CLU_012520_5_2_5"/>
<dbReference type="OrthoDB" id="9761808at2"/>
<dbReference type="Proteomes" id="UP000001976">
    <property type="component" value="Plasmid pSymA"/>
</dbReference>
<dbReference type="GO" id="GO:0005829">
    <property type="term" value="C:cytosol"/>
    <property type="evidence" value="ECO:0007669"/>
    <property type="project" value="TreeGrafter"/>
</dbReference>
<dbReference type="GO" id="GO:0097367">
    <property type="term" value="F:carbohydrate derivative binding"/>
    <property type="evidence" value="ECO:0007669"/>
    <property type="project" value="InterPro"/>
</dbReference>
<dbReference type="GO" id="GO:0004360">
    <property type="term" value="F:glutamine-fructose-6-phosphate transaminase (isomerizing) activity"/>
    <property type="evidence" value="ECO:0007669"/>
    <property type="project" value="UniProtKB-UniRule"/>
</dbReference>
<dbReference type="GO" id="GO:0005975">
    <property type="term" value="P:carbohydrate metabolic process"/>
    <property type="evidence" value="ECO:0007669"/>
    <property type="project" value="UniProtKB-UniRule"/>
</dbReference>
<dbReference type="GO" id="GO:0006002">
    <property type="term" value="P:fructose 6-phosphate metabolic process"/>
    <property type="evidence" value="ECO:0007669"/>
    <property type="project" value="TreeGrafter"/>
</dbReference>
<dbReference type="GO" id="GO:0006487">
    <property type="term" value="P:protein N-linked glycosylation"/>
    <property type="evidence" value="ECO:0007669"/>
    <property type="project" value="TreeGrafter"/>
</dbReference>
<dbReference type="GO" id="GO:0006047">
    <property type="term" value="P:UDP-N-acetylglucosamine metabolic process"/>
    <property type="evidence" value="ECO:0007669"/>
    <property type="project" value="TreeGrafter"/>
</dbReference>
<dbReference type="CDD" id="cd00714">
    <property type="entry name" value="GFAT"/>
    <property type="match status" value="1"/>
</dbReference>
<dbReference type="CDD" id="cd05008">
    <property type="entry name" value="SIS_GlmS_GlmD_1"/>
    <property type="match status" value="1"/>
</dbReference>
<dbReference type="CDD" id="cd05009">
    <property type="entry name" value="SIS_GlmS_GlmD_2"/>
    <property type="match status" value="1"/>
</dbReference>
<dbReference type="FunFam" id="3.40.50.10490:FF:000001">
    <property type="entry name" value="Glutamine--fructose-6-phosphate aminotransferase [isomerizing]"/>
    <property type="match status" value="1"/>
</dbReference>
<dbReference type="FunFam" id="3.40.50.10490:FF:000002">
    <property type="entry name" value="Glutamine--fructose-6-phosphate aminotransferase [isomerizing]"/>
    <property type="match status" value="1"/>
</dbReference>
<dbReference type="FunFam" id="3.60.20.10:FF:000006">
    <property type="entry name" value="Glutamine--fructose-6-phosphate aminotransferase [isomerizing]"/>
    <property type="match status" value="1"/>
</dbReference>
<dbReference type="Gene3D" id="3.40.50.10490">
    <property type="entry name" value="Glucose-6-phosphate isomerase like protein, domain 1"/>
    <property type="match status" value="2"/>
</dbReference>
<dbReference type="Gene3D" id="3.60.20.10">
    <property type="entry name" value="Glutamine Phosphoribosylpyrophosphate, subunit 1, domain 1"/>
    <property type="match status" value="1"/>
</dbReference>
<dbReference type="HAMAP" id="MF_00164">
    <property type="entry name" value="GlmS"/>
    <property type="match status" value="1"/>
</dbReference>
<dbReference type="InterPro" id="IPR017932">
    <property type="entry name" value="GATase_2_dom"/>
</dbReference>
<dbReference type="InterPro" id="IPR005855">
    <property type="entry name" value="GFAT"/>
</dbReference>
<dbReference type="InterPro" id="IPR047084">
    <property type="entry name" value="GFAT_N"/>
</dbReference>
<dbReference type="InterPro" id="IPR035466">
    <property type="entry name" value="GlmS/AgaS_SIS"/>
</dbReference>
<dbReference type="InterPro" id="IPR035490">
    <property type="entry name" value="GlmS/FrlB_SIS"/>
</dbReference>
<dbReference type="InterPro" id="IPR029055">
    <property type="entry name" value="Ntn_hydrolases_N"/>
</dbReference>
<dbReference type="InterPro" id="IPR001347">
    <property type="entry name" value="SIS_dom"/>
</dbReference>
<dbReference type="InterPro" id="IPR046348">
    <property type="entry name" value="SIS_dom_sf"/>
</dbReference>
<dbReference type="NCBIfam" id="TIGR01135">
    <property type="entry name" value="glmS"/>
    <property type="match status" value="1"/>
</dbReference>
<dbReference type="NCBIfam" id="NF001484">
    <property type="entry name" value="PRK00331.1"/>
    <property type="match status" value="1"/>
</dbReference>
<dbReference type="PANTHER" id="PTHR10937">
    <property type="entry name" value="GLUCOSAMINE--FRUCTOSE-6-PHOSPHATE AMINOTRANSFERASE, ISOMERIZING"/>
    <property type="match status" value="1"/>
</dbReference>
<dbReference type="PANTHER" id="PTHR10937:SF0">
    <property type="entry name" value="GLUTAMINE--FRUCTOSE-6-PHOSPHATE TRANSAMINASE (ISOMERIZING)"/>
    <property type="match status" value="1"/>
</dbReference>
<dbReference type="Pfam" id="PF13522">
    <property type="entry name" value="GATase_6"/>
    <property type="match status" value="1"/>
</dbReference>
<dbReference type="Pfam" id="PF01380">
    <property type="entry name" value="SIS"/>
    <property type="match status" value="2"/>
</dbReference>
<dbReference type="SUPFAM" id="SSF56235">
    <property type="entry name" value="N-terminal nucleophile aminohydrolases (Ntn hydrolases)"/>
    <property type="match status" value="1"/>
</dbReference>
<dbReference type="SUPFAM" id="SSF53697">
    <property type="entry name" value="SIS domain"/>
    <property type="match status" value="1"/>
</dbReference>
<dbReference type="PROSITE" id="PS51278">
    <property type="entry name" value="GATASE_TYPE_2"/>
    <property type="match status" value="1"/>
</dbReference>
<dbReference type="PROSITE" id="PS51464">
    <property type="entry name" value="SIS"/>
    <property type="match status" value="2"/>
</dbReference>
<sequence length="608" mass="65919">MCGIVGIVGNQPVSERLVEALKRLEYRGYDSAGVATIDAGTLQRRRAEGKLVNLESRLREEPLAGTIGIAHTRWATHGAPTERNAHPHFTEGVAVVHNGIIENFAELKDELAAGGAEFQTETDTEVVAHLLTKYRRDGLGRREAMHAMLKRVKGAYALAVLFEDDPSTIMAARNGPPLAIGHGSGEMFLGSDAIALAPFTNEITYLIDGDWAVIGKTGVHIFDFDGNVVERPRQISTAAAFLVDKGNHRHFMEKEIYEQPEVIAHALGHYVNFIENRVVPISDAIDFGKVPSLAISACGTAYLAGLIGKYWFERYARLPVEIDVASEFRYREIPLSPQSAALFISQSGETADTLASLRYCKEHGLKIGAVVNARESTIARESDAVFPILAGPEIGVASTKAFTCQLAVLAALAVGAGKARGTISGEEEQALVKSLAEMPRIMGQVLNSIQPKIESLSRELSKCHDVLYLGRGTSFPLAMEGALKLKEISYIHAEGYAAGELKHGPIALIDENMPVIVIAPHDRFFDKTVSNMQEVAARGGRIILITDEKGAAASKLDTMHTIVLPEVDEIIAPMIFSLPLQLLAYHTAVFMGTDVDQPRNLAKSVTVE</sequence>
<reference key="1">
    <citation type="journal article" date="2001" name="Proc. Natl. Acad. Sci. U.S.A.">
        <title>Nucleotide sequence and predicted functions of the entire Sinorhizobium meliloti pSymA megaplasmid.</title>
        <authorList>
            <person name="Barnett M.J."/>
            <person name="Fisher R.F."/>
            <person name="Jones T."/>
            <person name="Komp C."/>
            <person name="Abola A.P."/>
            <person name="Barloy-Hubler F."/>
            <person name="Bowser L."/>
            <person name="Capela D."/>
            <person name="Galibert F."/>
            <person name="Gouzy J."/>
            <person name="Gurjal M."/>
            <person name="Hong A."/>
            <person name="Huizar L."/>
            <person name="Hyman R.W."/>
            <person name="Kahn D."/>
            <person name="Kahn M.L."/>
            <person name="Kalman S."/>
            <person name="Keating D.H."/>
            <person name="Palm C."/>
            <person name="Peck M.C."/>
            <person name="Surzycki R."/>
            <person name="Wells D.H."/>
            <person name="Yeh K.-C."/>
            <person name="Davis R.W."/>
            <person name="Federspiel N.A."/>
            <person name="Long S.R."/>
        </authorList>
    </citation>
    <scope>NUCLEOTIDE SEQUENCE [LARGE SCALE GENOMIC DNA]</scope>
    <source>
        <strain>1021</strain>
    </source>
</reference>
<reference key="2">
    <citation type="journal article" date="2001" name="Science">
        <title>The composite genome of the legume symbiont Sinorhizobium meliloti.</title>
        <authorList>
            <person name="Galibert F."/>
            <person name="Finan T.M."/>
            <person name="Long S.R."/>
            <person name="Puehler A."/>
            <person name="Abola P."/>
            <person name="Ampe F."/>
            <person name="Barloy-Hubler F."/>
            <person name="Barnett M.J."/>
            <person name="Becker A."/>
            <person name="Boistard P."/>
            <person name="Bothe G."/>
            <person name="Boutry M."/>
            <person name="Bowser L."/>
            <person name="Buhrmester J."/>
            <person name="Cadieu E."/>
            <person name="Capela D."/>
            <person name="Chain P."/>
            <person name="Cowie A."/>
            <person name="Davis R.W."/>
            <person name="Dreano S."/>
            <person name="Federspiel N.A."/>
            <person name="Fisher R.F."/>
            <person name="Gloux S."/>
            <person name="Godrie T."/>
            <person name="Goffeau A."/>
            <person name="Golding B."/>
            <person name="Gouzy J."/>
            <person name="Gurjal M."/>
            <person name="Hernandez-Lucas I."/>
            <person name="Hong A."/>
            <person name="Huizar L."/>
            <person name="Hyman R.W."/>
            <person name="Jones T."/>
            <person name="Kahn D."/>
            <person name="Kahn M.L."/>
            <person name="Kalman S."/>
            <person name="Keating D.H."/>
            <person name="Kiss E."/>
            <person name="Komp C."/>
            <person name="Lelaure V."/>
            <person name="Masuy D."/>
            <person name="Palm C."/>
            <person name="Peck M.C."/>
            <person name="Pohl T.M."/>
            <person name="Portetelle D."/>
            <person name="Purnelle B."/>
            <person name="Ramsperger U."/>
            <person name="Surzycki R."/>
            <person name="Thebault P."/>
            <person name="Vandenbol M."/>
            <person name="Vorhoelter F.J."/>
            <person name="Weidner S."/>
            <person name="Wells D.H."/>
            <person name="Wong K."/>
            <person name="Yeh K.-C."/>
            <person name="Batut J."/>
        </authorList>
    </citation>
    <scope>NUCLEOTIDE SEQUENCE [LARGE SCALE GENOMIC DNA]</scope>
    <source>
        <strain>1021</strain>
    </source>
</reference>
<comment type="function">
    <text evidence="1">Involved in the production of the root hair deformation (HAD) factor specifically on medicago.</text>
</comment>
<comment type="catalytic activity">
    <reaction>
        <text>D-fructose 6-phosphate + L-glutamine = D-glucosamine 6-phosphate + L-glutamate</text>
        <dbReference type="Rhea" id="RHEA:13237"/>
        <dbReference type="ChEBI" id="CHEBI:29985"/>
        <dbReference type="ChEBI" id="CHEBI:58359"/>
        <dbReference type="ChEBI" id="CHEBI:58725"/>
        <dbReference type="ChEBI" id="CHEBI:61527"/>
        <dbReference type="EC" id="2.6.1.16"/>
    </reaction>
</comment>
<comment type="subcellular location">
    <subcellularLocation>
        <location evidence="1">Cytoplasm</location>
    </subcellularLocation>
</comment>
<feature type="initiator methionine" description="Removed" evidence="1">
    <location>
        <position position="1"/>
    </location>
</feature>
<feature type="chain" id="PRO_0000135437" description="Glutamine--fructose-6-phosphate aminotransferase [isomerizing]">
    <location>
        <begin position="2"/>
        <end position="608"/>
    </location>
</feature>
<feature type="domain" description="Glutamine amidotransferase type-2">
    <location>
        <begin position="2"/>
        <end position="217"/>
    </location>
</feature>
<feature type="domain" description="SIS 1">
    <location>
        <begin position="281"/>
        <end position="422"/>
    </location>
</feature>
<feature type="domain" description="SIS 2">
    <location>
        <begin position="456"/>
        <end position="598"/>
    </location>
</feature>
<feature type="active site" description="Nucleophile; for GATase activity" evidence="1">
    <location>
        <position position="2"/>
    </location>
</feature>
<feature type="active site" description="For Fru-6P isomerization activity" evidence="1">
    <location>
        <position position="603"/>
    </location>
</feature>
<accession>Q92ZK3</accession>